<dbReference type="EC" id="2.5.1.78" evidence="1"/>
<dbReference type="EMBL" id="BA000033">
    <property type="protein sequence ID" value="BAB95573.1"/>
    <property type="molecule type" value="Genomic_DNA"/>
</dbReference>
<dbReference type="SMR" id="P61597"/>
<dbReference type="KEGG" id="sam:MW1708"/>
<dbReference type="HOGENOM" id="CLU_089358_1_1_9"/>
<dbReference type="UniPathway" id="UPA00275">
    <property type="reaction ID" value="UER00404"/>
</dbReference>
<dbReference type="GO" id="GO:0005829">
    <property type="term" value="C:cytosol"/>
    <property type="evidence" value="ECO:0007669"/>
    <property type="project" value="TreeGrafter"/>
</dbReference>
<dbReference type="GO" id="GO:0009349">
    <property type="term" value="C:riboflavin synthase complex"/>
    <property type="evidence" value="ECO:0007669"/>
    <property type="project" value="InterPro"/>
</dbReference>
<dbReference type="GO" id="GO:0000906">
    <property type="term" value="F:6,7-dimethyl-8-ribityllumazine synthase activity"/>
    <property type="evidence" value="ECO:0007669"/>
    <property type="project" value="UniProtKB-UniRule"/>
</dbReference>
<dbReference type="GO" id="GO:0009231">
    <property type="term" value="P:riboflavin biosynthetic process"/>
    <property type="evidence" value="ECO:0007669"/>
    <property type="project" value="UniProtKB-UniRule"/>
</dbReference>
<dbReference type="CDD" id="cd09209">
    <property type="entry name" value="Lumazine_synthase-I"/>
    <property type="match status" value="1"/>
</dbReference>
<dbReference type="FunFam" id="3.40.50.960:FF:000001">
    <property type="entry name" value="6,7-dimethyl-8-ribityllumazine synthase"/>
    <property type="match status" value="1"/>
</dbReference>
<dbReference type="Gene3D" id="3.40.50.960">
    <property type="entry name" value="Lumazine/riboflavin synthase"/>
    <property type="match status" value="1"/>
</dbReference>
<dbReference type="HAMAP" id="MF_00178">
    <property type="entry name" value="Lumazine_synth"/>
    <property type="match status" value="1"/>
</dbReference>
<dbReference type="InterPro" id="IPR034964">
    <property type="entry name" value="LS"/>
</dbReference>
<dbReference type="InterPro" id="IPR002180">
    <property type="entry name" value="LS/RS"/>
</dbReference>
<dbReference type="InterPro" id="IPR036467">
    <property type="entry name" value="LS/RS_sf"/>
</dbReference>
<dbReference type="NCBIfam" id="TIGR00114">
    <property type="entry name" value="lumazine-synth"/>
    <property type="match status" value="1"/>
</dbReference>
<dbReference type="NCBIfam" id="NF000812">
    <property type="entry name" value="PRK00061.1-4"/>
    <property type="match status" value="1"/>
</dbReference>
<dbReference type="PANTHER" id="PTHR21058:SF0">
    <property type="entry name" value="6,7-DIMETHYL-8-RIBITYLLUMAZINE SYNTHASE"/>
    <property type="match status" value="1"/>
</dbReference>
<dbReference type="PANTHER" id="PTHR21058">
    <property type="entry name" value="6,7-DIMETHYL-8-RIBITYLLUMAZINE SYNTHASE DMRL SYNTHASE LUMAZINE SYNTHASE"/>
    <property type="match status" value="1"/>
</dbReference>
<dbReference type="Pfam" id="PF00885">
    <property type="entry name" value="DMRL_synthase"/>
    <property type="match status" value="1"/>
</dbReference>
<dbReference type="SUPFAM" id="SSF52121">
    <property type="entry name" value="Lumazine synthase"/>
    <property type="match status" value="1"/>
</dbReference>
<feature type="chain" id="PRO_0000134810" description="6,7-dimethyl-8-ribityllumazine synthase">
    <location>
        <begin position="1"/>
        <end position="154"/>
    </location>
</feature>
<feature type="active site" description="Proton donor" evidence="1">
    <location>
        <position position="87"/>
    </location>
</feature>
<feature type="binding site" evidence="1">
    <location>
        <position position="21"/>
    </location>
    <ligand>
        <name>5-amino-6-(D-ribitylamino)uracil</name>
        <dbReference type="ChEBI" id="CHEBI:15934"/>
    </ligand>
</feature>
<feature type="binding site" evidence="1">
    <location>
        <begin position="55"/>
        <end position="57"/>
    </location>
    <ligand>
        <name>5-amino-6-(D-ribitylamino)uracil</name>
        <dbReference type="ChEBI" id="CHEBI:15934"/>
    </ligand>
</feature>
<feature type="binding site" evidence="1">
    <location>
        <begin position="79"/>
        <end position="81"/>
    </location>
    <ligand>
        <name>5-amino-6-(D-ribitylamino)uracil</name>
        <dbReference type="ChEBI" id="CHEBI:15934"/>
    </ligand>
</feature>
<feature type="binding site" evidence="1">
    <location>
        <begin position="84"/>
        <end position="85"/>
    </location>
    <ligand>
        <name>(2S)-2-hydroxy-3-oxobutyl phosphate</name>
        <dbReference type="ChEBI" id="CHEBI:58830"/>
    </ligand>
</feature>
<feature type="binding site" evidence="1">
    <location>
        <position position="112"/>
    </location>
    <ligand>
        <name>5-amino-6-(D-ribitylamino)uracil</name>
        <dbReference type="ChEBI" id="CHEBI:15934"/>
    </ligand>
</feature>
<feature type="binding site" evidence="1">
    <location>
        <position position="126"/>
    </location>
    <ligand>
        <name>(2S)-2-hydroxy-3-oxobutyl phosphate</name>
        <dbReference type="ChEBI" id="CHEBI:58830"/>
    </ligand>
</feature>
<name>RISB_STAAW</name>
<keyword id="KW-0686">Riboflavin biosynthesis</keyword>
<keyword id="KW-0808">Transferase</keyword>
<accession>P61597</accession>
<accession>Q931N8</accession>
<accession>Q99TA1</accession>
<evidence type="ECO:0000255" key="1">
    <source>
        <dbReference type="HAMAP-Rule" id="MF_00178"/>
    </source>
</evidence>
<proteinExistence type="inferred from homology"/>
<comment type="function">
    <text evidence="1">Catalyzes the formation of 6,7-dimethyl-8-ribityllumazine by condensation of 5-amino-6-(D-ribitylamino)uracil with 3,4-dihydroxy-2-butanone 4-phosphate. This is the penultimate step in the biosynthesis of riboflavin.</text>
</comment>
<comment type="catalytic activity">
    <reaction evidence="1">
        <text>(2S)-2-hydroxy-3-oxobutyl phosphate + 5-amino-6-(D-ribitylamino)uracil = 6,7-dimethyl-8-(1-D-ribityl)lumazine + phosphate + 2 H2O + H(+)</text>
        <dbReference type="Rhea" id="RHEA:26152"/>
        <dbReference type="ChEBI" id="CHEBI:15377"/>
        <dbReference type="ChEBI" id="CHEBI:15378"/>
        <dbReference type="ChEBI" id="CHEBI:15934"/>
        <dbReference type="ChEBI" id="CHEBI:43474"/>
        <dbReference type="ChEBI" id="CHEBI:58201"/>
        <dbReference type="ChEBI" id="CHEBI:58830"/>
        <dbReference type="EC" id="2.5.1.78"/>
    </reaction>
</comment>
<comment type="pathway">
    <text evidence="1">Cofactor biosynthesis; riboflavin biosynthesis; riboflavin from 2-hydroxy-3-oxobutyl phosphate and 5-amino-6-(D-ribitylamino)uracil: step 1/2.</text>
</comment>
<comment type="subunit">
    <text evidence="1">Forms an icosahedral capsid composed of 60 subunits, arranged as a dodecamer of pentamers.</text>
</comment>
<comment type="similarity">
    <text evidence="1">Belongs to the DMRL synthase family.</text>
</comment>
<gene>
    <name evidence="1" type="primary">ribH</name>
    <name type="ordered locus">MW1708</name>
</gene>
<protein>
    <recommendedName>
        <fullName evidence="1">6,7-dimethyl-8-ribityllumazine synthase</fullName>
        <shortName evidence="1">DMRL synthase</shortName>
        <shortName evidence="1">LS</shortName>
        <shortName evidence="1">Lumazine synthase</shortName>
        <ecNumber evidence="1">2.5.1.78</ecNumber>
    </recommendedName>
</protein>
<sequence>MNFEGKLIGKDLKVAIVVSRFNDFITGRLLEGAKDTLIRHDVNEDNIDVAFVPGAFEIPLVAKKLASSGNYDAIITLGCVIRGATSHYDYVCNEVAKGVSKVNDQTNVPVIFGILTTESIEQAVERAGTKAGNKGAEAAVSAIEMANLLKSIKA</sequence>
<organism>
    <name type="scientific">Staphylococcus aureus (strain MW2)</name>
    <dbReference type="NCBI Taxonomy" id="196620"/>
    <lineage>
        <taxon>Bacteria</taxon>
        <taxon>Bacillati</taxon>
        <taxon>Bacillota</taxon>
        <taxon>Bacilli</taxon>
        <taxon>Bacillales</taxon>
        <taxon>Staphylococcaceae</taxon>
        <taxon>Staphylococcus</taxon>
    </lineage>
</organism>
<reference key="1">
    <citation type="journal article" date="2002" name="Lancet">
        <title>Genome and virulence determinants of high virulence community-acquired MRSA.</title>
        <authorList>
            <person name="Baba T."/>
            <person name="Takeuchi F."/>
            <person name="Kuroda M."/>
            <person name="Yuzawa H."/>
            <person name="Aoki K."/>
            <person name="Oguchi A."/>
            <person name="Nagai Y."/>
            <person name="Iwama N."/>
            <person name="Asano K."/>
            <person name="Naimi T."/>
            <person name="Kuroda H."/>
            <person name="Cui L."/>
            <person name="Yamamoto K."/>
            <person name="Hiramatsu K."/>
        </authorList>
    </citation>
    <scope>NUCLEOTIDE SEQUENCE [LARGE SCALE GENOMIC DNA]</scope>
    <source>
        <strain>MW2</strain>
    </source>
</reference>